<gene>
    <name evidence="1" type="primary">sfsA</name>
    <name type="ordered locus">PHZ_c1072</name>
</gene>
<sequence>MDFPSPLIRGRLVSRYKRFFADVVLDDGTPLTAHCPNPGAMLGLNTPGLTCWLSRSDDPKRKLAHTLELVEADGGLVGINTLHPNRLVAEALAAGAIPEVAGYASHRREVRYGENSRVDFLLEAPDRPRCWLEVKNVHLMRQPGLAEFPDCVAARSTRHLRELAAMAAQGDRAVVLFVVQRTDCDRFSPAADCDPKFAAALAEVASAGVEVLVYGCEIDAARVRLGRPLPWDTSGTGRPA</sequence>
<feature type="chain" id="PRO_1000093580" description="Sugar fermentation stimulation protein homolog">
    <location>
        <begin position="1"/>
        <end position="240"/>
    </location>
</feature>
<protein>
    <recommendedName>
        <fullName evidence="1">Sugar fermentation stimulation protein homolog</fullName>
    </recommendedName>
</protein>
<reference key="1">
    <citation type="journal article" date="2008" name="BMC Genomics">
        <title>Complete genome of Phenylobacterium zucineum - a novel facultative intracellular bacterium isolated from human erythroleukemia cell line K562.</title>
        <authorList>
            <person name="Luo Y."/>
            <person name="Xu X."/>
            <person name="Ding Z."/>
            <person name="Liu Z."/>
            <person name="Zhang B."/>
            <person name="Yan Z."/>
            <person name="Sun J."/>
            <person name="Hu S."/>
            <person name="Hu X."/>
        </authorList>
    </citation>
    <scope>NUCLEOTIDE SEQUENCE [LARGE SCALE GENOMIC DNA]</scope>
    <source>
        <strain>HLK1</strain>
    </source>
</reference>
<keyword id="KW-1185">Reference proteome</keyword>
<proteinExistence type="inferred from homology"/>
<organism>
    <name type="scientific">Phenylobacterium zucineum (strain HLK1)</name>
    <dbReference type="NCBI Taxonomy" id="450851"/>
    <lineage>
        <taxon>Bacteria</taxon>
        <taxon>Pseudomonadati</taxon>
        <taxon>Pseudomonadota</taxon>
        <taxon>Alphaproteobacteria</taxon>
        <taxon>Caulobacterales</taxon>
        <taxon>Caulobacteraceae</taxon>
        <taxon>Phenylobacterium</taxon>
    </lineage>
</organism>
<dbReference type="EMBL" id="CP000747">
    <property type="protein sequence ID" value="ACG77486.1"/>
    <property type="molecule type" value="Genomic_DNA"/>
</dbReference>
<dbReference type="RefSeq" id="WP_012521632.1">
    <property type="nucleotide sequence ID" value="NC_011144.1"/>
</dbReference>
<dbReference type="SMR" id="B4R7V3"/>
<dbReference type="STRING" id="450851.PHZ_c1072"/>
<dbReference type="KEGG" id="pzu:PHZ_c1072"/>
<dbReference type="eggNOG" id="COG1489">
    <property type="taxonomic scope" value="Bacteria"/>
</dbReference>
<dbReference type="HOGENOM" id="CLU_052299_2_0_5"/>
<dbReference type="OrthoDB" id="9802365at2"/>
<dbReference type="Proteomes" id="UP000001868">
    <property type="component" value="Chromosome"/>
</dbReference>
<dbReference type="GO" id="GO:0003677">
    <property type="term" value="F:DNA binding"/>
    <property type="evidence" value="ECO:0007669"/>
    <property type="project" value="InterPro"/>
</dbReference>
<dbReference type="CDD" id="cd22359">
    <property type="entry name" value="SfsA-like_bacterial"/>
    <property type="match status" value="1"/>
</dbReference>
<dbReference type="Gene3D" id="2.40.50.580">
    <property type="match status" value="1"/>
</dbReference>
<dbReference type="Gene3D" id="3.40.1350.60">
    <property type="match status" value="1"/>
</dbReference>
<dbReference type="HAMAP" id="MF_00095">
    <property type="entry name" value="SfsA"/>
    <property type="match status" value="1"/>
</dbReference>
<dbReference type="InterPro" id="IPR005224">
    <property type="entry name" value="SfsA"/>
</dbReference>
<dbReference type="InterPro" id="IPR040452">
    <property type="entry name" value="SfsA_C"/>
</dbReference>
<dbReference type="InterPro" id="IPR041465">
    <property type="entry name" value="SfsA_N"/>
</dbReference>
<dbReference type="NCBIfam" id="TIGR00230">
    <property type="entry name" value="sfsA"/>
    <property type="match status" value="1"/>
</dbReference>
<dbReference type="PANTHER" id="PTHR30545">
    <property type="entry name" value="SUGAR FERMENTATION STIMULATION PROTEIN A"/>
    <property type="match status" value="1"/>
</dbReference>
<dbReference type="PANTHER" id="PTHR30545:SF2">
    <property type="entry name" value="SUGAR FERMENTATION STIMULATION PROTEIN A"/>
    <property type="match status" value="1"/>
</dbReference>
<dbReference type="Pfam" id="PF03749">
    <property type="entry name" value="SfsA"/>
    <property type="match status" value="1"/>
</dbReference>
<dbReference type="Pfam" id="PF17746">
    <property type="entry name" value="SfsA_N"/>
    <property type="match status" value="1"/>
</dbReference>
<evidence type="ECO:0000255" key="1">
    <source>
        <dbReference type="HAMAP-Rule" id="MF_00095"/>
    </source>
</evidence>
<comment type="similarity">
    <text evidence="1">Belongs to the SfsA family.</text>
</comment>
<name>SFSA_PHEZH</name>
<accession>B4R7V3</accession>